<reference key="1">
    <citation type="submission" date="2007-12" db="EMBL/GenBank/DDBJ databases">
        <title>Brucella suis ATCC 23445 whole genome shotgun sequencing project.</title>
        <authorList>
            <person name="Setubal J.C."/>
            <person name="Bowns C."/>
            <person name="Boyle S."/>
            <person name="Crasta O.R."/>
            <person name="Czar M.J."/>
            <person name="Dharmanolla C."/>
            <person name="Gillespie J.J."/>
            <person name="Kenyon R.W."/>
            <person name="Lu J."/>
            <person name="Mane S."/>
            <person name="Mohapatra S."/>
            <person name="Nagrani S."/>
            <person name="Purkayastha A."/>
            <person name="Rajasimha H.K."/>
            <person name="Shallom J.M."/>
            <person name="Shallom S."/>
            <person name="Shukla M."/>
            <person name="Snyder E.E."/>
            <person name="Sobral B.W."/>
            <person name="Wattam A.R."/>
            <person name="Will R."/>
            <person name="Williams K."/>
            <person name="Yoo H."/>
            <person name="Bruce D."/>
            <person name="Detter C."/>
            <person name="Munk C."/>
            <person name="Brettin T.S."/>
        </authorList>
    </citation>
    <scope>NUCLEOTIDE SEQUENCE [LARGE SCALE GENOMIC DNA]</scope>
    <source>
        <strain>ATCC 23445 / NCTC 10510</strain>
    </source>
</reference>
<feature type="chain" id="PRO_1000078223" description="Histidine ammonia-lyase">
    <location>
        <begin position="1"/>
        <end position="511"/>
    </location>
</feature>
<feature type="modified residue" description="2,3-didehydroalanine (Ser)" evidence="1">
    <location>
        <position position="143"/>
    </location>
</feature>
<feature type="cross-link" description="5-imidazolinone (Ala-Gly)" evidence="1">
    <location>
        <begin position="142"/>
        <end position="144"/>
    </location>
</feature>
<comment type="catalytic activity">
    <reaction evidence="1">
        <text>L-histidine = trans-urocanate + NH4(+)</text>
        <dbReference type="Rhea" id="RHEA:21232"/>
        <dbReference type="ChEBI" id="CHEBI:17771"/>
        <dbReference type="ChEBI" id="CHEBI:28938"/>
        <dbReference type="ChEBI" id="CHEBI:57595"/>
        <dbReference type="EC" id="4.3.1.3"/>
    </reaction>
</comment>
<comment type="pathway">
    <text evidence="1">Amino-acid degradation; L-histidine degradation into L-glutamate; N-formimidoyl-L-glutamate from L-histidine: step 1/3.</text>
</comment>
<comment type="subcellular location">
    <subcellularLocation>
        <location evidence="1">Cytoplasm</location>
    </subcellularLocation>
</comment>
<comment type="PTM">
    <text evidence="1">Contains an active site 4-methylidene-imidazol-5-one (MIO), which is formed autocatalytically by cyclization and dehydration of residues Ala-Ser-Gly.</text>
</comment>
<comment type="similarity">
    <text evidence="1">Belongs to the PAL/histidase family.</text>
</comment>
<accession>A9WVU3</accession>
<proteinExistence type="inferred from homology"/>
<protein>
    <recommendedName>
        <fullName evidence="1">Histidine ammonia-lyase</fullName>
        <shortName evidence="1">Histidase</shortName>
        <ecNumber evidence="1">4.3.1.3</ecNumber>
    </recommendedName>
</protein>
<sequence length="511" mass="53268">MTIILKPGSVPLETLEKIYREGLPVRIDPAFHAGIEKAAARIAEIAAGDAPVYGINTGFGKLASIRIAAGDVATLQRNLILSHCCGVGEPLSENIVRLIMALKLVSLGRGASGVRLEVITLIEAMLEKGVIPMIPEKGSVGASGDLAPLAHMTAAMIGEGEAFYRGERLSGAKALGKAGLKPVVLAAKEGLALINGTQTSTALALAGLFRAHRAVRTALITGALSTDAAMGSDAPFHEEIHQLRGHKGQIDAGRALRTLLEGSAIRRSHLEGDQRVQDPYCIRCQPQVDGACLDILRQAARTLEIEANAVTDNPLVLSDGRAVSGGNFHAEPVAFAADQIALAVCEIGAISQRRIALLVDPSLSFGLPAFLARKPGLNSGLMIAEVTSAALMSENNQMAHPASVDSTPTSANQEDHVSMACHGARRLLQMTANLNAIIGIEALTGALGVELRKPLTTSAELAKVIAALRAKVAALEEDRYMADDLKAAAELVADGTLSGVISAGILPDLET</sequence>
<gene>
    <name evidence="1" type="primary">hutH</name>
    <name type="ordered locus">BSUIS_B0923</name>
</gene>
<evidence type="ECO:0000255" key="1">
    <source>
        <dbReference type="HAMAP-Rule" id="MF_00229"/>
    </source>
</evidence>
<keyword id="KW-0963">Cytoplasm</keyword>
<keyword id="KW-0369">Histidine metabolism</keyword>
<keyword id="KW-0456">Lyase</keyword>
<dbReference type="EC" id="4.3.1.3" evidence="1"/>
<dbReference type="EMBL" id="CP000912">
    <property type="protein sequence ID" value="ABY39879.1"/>
    <property type="molecule type" value="Genomic_DNA"/>
</dbReference>
<dbReference type="RefSeq" id="WP_012243440.1">
    <property type="nucleotide sequence ID" value="NC_010167.1"/>
</dbReference>
<dbReference type="SMR" id="A9WVU3"/>
<dbReference type="KEGG" id="bmt:BSUIS_B0923"/>
<dbReference type="HOGENOM" id="CLU_014801_4_0_5"/>
<dbReference type="UniPathway" id="UPA00379">
    <property type="reaction ID" value="UER00549"/>
</dbReference>
<dbReference type="Proteomes" id="UP000008545">
    <property type="component" value="Chromosome II"/>
</dbReference>
<dbReference type="GO" id="GO:0005737">
    <property type="term" value="C:cytoplasm"/>
    <property type="evidence" value="ECO:0007669"/>
    <property type="project" value="UniProtKB-SubCell"/>
</dbReference>
<dbReference type="GO" id="GO:0004397">
    <property type="term" value="F:histidine ammonia-lyase activity"/>
    <property type="evidence" value="ECO:0007669"/>
    <property type="project" value="UniProtKB-UniRule"/>
</dbReference>
<dbReference type="GO" id="GO:0019556">
    <property type="term" value="P:L-histidine catabolic process to glutamate and formamide"/>
    <property type="evidence" value="ECO:0007669"/>
    <property type="project" value="UniProtKB-UniPathway"/>
</dbReference>
<dbReference type="GO" id="GO:0019557">
    <property type="term" value="P:L-histidine catabolic process to glutamate and formate"/>
    <property type="evidence" value="ECO:0007669"/>
    <property type="project" value="UniProtKB-UniPathway"/>
</dbReference>
<dbReference type="CDD" id="cd00332">
    <property type="entry name" value="PAL-HAL"/>
    <property type="match status" value="1"/>
</dbReference>
<dbReference type="FunFam" id="1.10.275.10:FF:000005">
    <property type="entry name" value="Histidine ammonia-lyase"/>
    <property type="match status" value="1"/>
</dbReference>
<dbReference type="FunFam" id="1.20.200.10:FF:000003">
    <property type="entry name" value="Histidine ammonia-lyase"/>
    <property type="match status" value="1"/>
</dbReference>
<dbReference type="Gene3D" id="1.20.200.10">
    <property type="entry name" value="Fumarase/aspartase (Central domain)"/>
    <property type="match status" value="1"/>
</dbReference>
<dbReference type="Gene3D" id="1.10.275.10">
    <property type="entry name" value="Fumarase/aspartase (N-terminal domain)"/>
    <property type="match status" value="1"/>
</dbReference>
<dbReference type="HAMAP" id="MF_00229">
    <property type="entry name" value="His_ammonia_lyase"/>
    <property type="match status" value="1"/>
</dbReference>
<dbReference type="InterPro" id="IPR001106">
    <property type="entry name" value="Aromatic_Lyase"/>
</dbReference>
<dbReference type="InterPro" id="IPR024083">
    <property type="entry name" value="Fumarase/histidase_N"/>
</dbReference>
<dbReference type="InterPro" id="IPR005921">
    <property type="entry name" value="HutH"/>
</dbReference>
<dbReference type="InterPro" id="IPR008948">
    <property type="entry name" value="L-Aspartase-like"/>
</dbReference>
<dbReference type="InterPro" id="IPR022313">
    <property type="entry name" value="Phe/His_NH3-lyase_AS"/>
</dbReference>
<dbReference type="NCBIfam" id="TIGR01225">
    <property type="entry name" value="hutH"/>
    <property type="match status" value="1"/>
</dbReference>
<dbReference type="NCBIfam" id="NF006871">
    <property type="entry name" value="PRK09367.1"/>
    <property type="match status" value="1"/>
</dbReference>
<dbReference type="PANTHER" id="PTHR10362">
    <property type="entry name" value="HISTIDINE AMMONIA-LYASE"/>
    <property type="match status" value="1"/>
</dbReference>
<dbReference type="Pfam" id="PF00221">
    <property type="entry name" value="Lyase_aromatic"/>
    <property type="match status" value="1"/>
</dbReference>
<dbReference type="SUPFAM" id="SSF48557">
    <property type="entry name" value="L-aspartase-like"/>
    <property type="match status" value="1"/>
</dbReference>
<dbReference type="PROSITE" id="PS00488">
    <property type="entry name" value="PAL_HISTIDASE"/>
    <property type="match status" value="1"/>
</dbReference>
<organism>
    <name type="scientific">Brucella suis (strain ATCC 23445 / NCTC 10510)</name>
    <dbReference type="NCBI Taxonomy" id="470137"/>
    <lineage>
        <taxon>Bacteria</taxon>
        <taxon>Pseudomonadati</taxon>
        <taxon>Pseudomonadota</taxon>
        <taxon>Alphaproteobacteria</taxon>
        <taxon>Hyphomicrobiales</taxon>
        <taxon>Brucellaceae</taxon>
        <taxon>Brucella/Ochrobactrum group</taxon>
        <taxon>Brucella</taxon>
    </lineage>
</organism>
<name>HUTH_BRUSI</name>